<sequence>MYQHIVVLTGAGISAESGLRTFRDQDGLWEEHHIEDVATPEGYAKDAELVERFYNSRWEQLHCGTVMPNAAHLALAKLEAEFSGQLLVVTQNIDDLHERAGSRRLLHMHGELSKGRCPRSRQTFLLREPFGVNNGCTCCIPAQRLRPHVVWFGEMPLGMDRIHDALDNCDLFIAIGTSGTVYPAAGFVDTANHHGAQTVEVNLQSPDRHSQFQYHLTGRAGELVPKLVDTILAGRVIGSDLAE</sequence>
<gene>
    <name evidence="2" type="primary">cobB</name>
    <name type="ordered locus">SO_1938</name>
</gene>
<dbReference type="EC" id="2.3.1.286" evidence="2"/>
<dbReference type="EMBL" id="AE014299">
    <property type="protein sequence ID" value="AAN54989.1"/>
    <property type="molecule type" value="Genomic_DNA"/>
</dbReference>
<dbReference type="RefSeq" id="NP_717545.1">
    <property type="nucleotide sequence ID" value="NC_004347.2"/>
</dbReference>
<dbReference type="RefSeq" id="WP_011072036.1">
    <property type="nucleotide sequence ID" value="NC_004347.2"/>
</dbReference>
<dbReference type="SMR" id="Q8EFN2"/>
<dbReference type="STRING" id="211586.SO_1938"/>
<dbReference type="PaxDb" id="211586-SO_1938"/>
<dbReference type="KEGG" id="son:SO_1938"/>
<dbReference type="PATRIC" id="fig|211586.12.peg.1862"/>
<dbReference type="eggNOG" id="COG0846">
    <property type="taxonomic scope" value="Bacteria"/>
</dbReference>
<dbReference type="HOGENOM" id="CLU_023643_3_1_6"/>
<dbReference type="OrthoDB" id="9800582at2"/>
<dbReference type="PhylomeDB" id="Q8EFN2"/>
<dbReference type="BioCyc" id="SONE211586:G1GMP-1787-MONOMER"/>
<dbReference type="Proteomes" id="UP000008186">
    <property type="component" value="Chromosome"/>
</dbReference>
<dbReference type="GO" id="GO:0005737">
    <property type="term" value="C:cytoplasm"/>
    <property type="evidence" value="ECO:0007669"/>
    <property type="project" value="UniProtKB-SubCell"/>
</dbReference>
<dbReference type="GO" id="GO:0017136">
    <property type="term" value="F:histone deacetylase activity, NAD-dependent"/>
    <property type="evidence" value="ECO:0000318"/>
    <property type="project" value="GO_Central"/>
</dbReference>
<dbReference type="GO" id="GO:0070403">
    <property type="term" value="F:NAD+ binding"/>
    <property type="evidence" value="ECO:0000318"/>
    <property type="project" value="GO_Central"/>
</dbReference>
<dbReference type="GO" id="GO:0036054">
    <property type="term" value="F:protein-malonyllysine demalonylase activity"/>
    <property type="evidence" value="ECO:0007669"/>
    <property type="project" value="InterPro"/>
</dbReference>
<dbReference type="GO" id="GO:0036055">
    <property type="term" value="F:protein-succinyllysine desuccinylase activity"/>
    <property type="evidence" value="ECO:0007669"/>
    <property type="project" value="UniProtKB-UniRule"/>
</dbReference>
<dbReference type="GO" id="GO:0008270">
    <property type="term" value="F:zinc ion binding"/>
    <property type="evidence" value="ECO:0007669"/>
    <property type="project" value="UniProtKB-UniRule"/>
</dbReference>
<dbReference type="CDD" id="cd01412">
    <property type="entry name" value="SIRT5_Af1_CobB"/>
    <property type="match status" value="1"/>
</dbReference>
<dbReference type="Gene3D" id="3.30.1600.10">
    <property type="entry name" value="SIR2/SIRT2 'Small Domain"/>
    <property type="match status" value="1"/>
</dbReference>
<dbReference type="Gene3D" id="3.40.50.1220">
    <property type="entry name" value="TPP-binding domain"/>
    <property type="match status" value="1"/>
</dbReference>
<dbReference type="HAMAP" id="MF_01121">
    <property type="entry name" value="Sirtuin_ClassIII"/>
    <property type="match status" value="1"/>
</dbReference>
<dbReference type="InterPro" id="IPR029035">
    <property type="entry name" value="DHS-like_NAD/FAD-binding_dom"/>
</dbReference>
<dbReference type="InterPro" id="IPR050134">
    <property type="entry name" value="NAD-dep_sirtuin_deacylases"/>
</dbReference>
<dbReference type="InterPro" id="IPR003000">
    <property type="entry name" value="Sirtuin"/>
</dbReference>
<dbReference type="InterPro" id="IPR026591">
    <property type="entry name" value="Sirtuin_cat_small_dom_sf"/>
</dbReference>
<dbReference type="InterPro" id="IPR027546">
    <property type="entry name" value="Sirtuin_class_III"/>
</dbReference>
<dbReference type="InterPro" id="IPR026590">
    <property type="entry name" value="Ssirtuin_cat_dom"/>
</dbReference>
<dbReference type="NCBIfam" id="NF001755">
    <property type="entry name" value="PRK00481.1-5"/>
    <property type="match status" value="1"/>
</dbReference>
<dbReference type="PANTHER" id="PTHR11085:SF4">
    <property type="entry name" value="NAD-DEPENDENT PROTEIN DEACYLASE"/>
    <property type="match status" value="1"/>
</dbReference>
<dbReference type="PANTHER" id="PTHR11085">
    <property type="entry name" value="NAD-DEPENDENT PROTEIN DEACYLASE SIRTUIN-5, MITOCHONDRIAL-RELATED"/>
    <property type="match status" value="1"/>
</dbReference>
<dbReference type="Pfam" id="PF02146">
    <property type="entry name" value="SIR2"/>
    <property type="match status" value="1"/>
</dbReference>
<dbReference type="SUPFAM" id="SSF52467">
    <property type="entry name" value="DHS-like NAD/FAD-binding domain"/>
    <property type="match status" value="1"/>
</dbReference>
<dbReference type="PROSITE" id="PS50305">
    <property type="entry name" value="SIRTUIN"/>
    <property type="match status" value="1"/>
</dbReference>
<feature type="chain" id="PRO_0000110346" description="NAD-dependent protein deacylase">
    <location>
        <begin position="1"/>
        <end position="243"/>
    </location>
</feature>
<feature type="domain" description="Deacetylase sirtuin-type" evidence="3">
    <location>
        <begin position="1"/>
        <end position="234"/>
    </location>
</feature>
<feature type="active site" description="Proton acceptor" evidence="2">
    <location>
        <position position="109"/>
    </location>
</feature>
<feature type="binding site" evidence="2">
    <location>
        <begin position="10"/>
        <end position="29"/>
    </location>
    <ligand>
        <name>NAD(+)</name>
        <dbReference type="ChEBI" id="CHEBI:57540"/>
    </ligand>
</feature>
<feature type="binding site" evidence="2">
    <location>
        <position position="54"/>
    </location>
    <ligand>
        <name>substrate</name>
    </ligand>
</feature>
<feature type="binding site" evidence="2">
    <location>
        <position position="57"/>
    </location>
    <ligand>
        <name>substrate</name>
    </ligand>
</feature>
<feature type="binding site" evidence="2">
    <location>
        <begin position="91"/>
        <end position="94"/>
    </location>
    <ligand>
        <name>NAD(+)</name>
        <dbReference type="ChEBI" id="CHEBI:57540"/>
    </ligand>
</feature>
<feature type="binding site" evidence="2">
    <location>
        <position position="117"/>
    </location>
    <ligand>
        <name>Zn(2+)</name>
        <dbReference type="ChEBI" id="CHEBI:29105"/>
    </ligand>
</feature>
<feature type="binding site" evidence="2">
    <location>
        <position position="136"/>
    </location>
    <ligand>
        <name>Zn(2+)</name>
        <dbReference type="ChEBI" id="CHEBI:29105"/>
    </ligand>
</feature>
<feature type="binding site" evidence="2">
    <location>
        <begin position="176"/>
        <end position="178"/>
    </location>
    <ligand>
        <name>NAD(+)</name>
        <dbReference type="ChEBI" id="CHEBI:57540"/>
    </ligand>
</feature>
<feature type="binding site" evidence="2">
    <location>
        <begin position="202"/>
        <end position="204"/>
    </location>
    <ligand>
        <name>NAD(+)</name>
        <dbReference type="ChEBI" id="CHEBI:57540"/>
    </ligand>
</feature>
<feature type="binding site" evidence="2">
    <location>
        <position position="220"/>
    </location>
    <ligand>
        <name>NAD(+)</name>
        <dbReference type="ChEBI" id="CHEBI:57540"/>
    </ligand>
</feature>
<keyword id="KW-0963">Cytoplasm</keyword>
<keyword id="KW-0479">Metal-binding</keyword>
<keyword id="KW-0520">NAD</keyword>
<keyword id="KW-1185">Reference proteome</keyword>
<keyword id="KW-0808">Transferase</keyword>
<keyword id="KW-0862">Zinc</keyword>
<accession>Q8EFN2</accession>
<protein>
    <recommendedName>
        <fullName evidence="2">NAD-dependent protein deacylase</fullName>
        <ecNumber evidence="2">2.3.1.286</ecNumber>
    </recommendedName>
    <alternativeName>
        <fullName evidence="2">Regulatory protein SIR2 homolog</fullName>
    </alternativeName>
</protein>
<reference key="1">
    <citation type="journal article" date="2002" name="Nat. Biotechnol.">
        <title>Genome sequence of the dissimilatory metal ion-reducing bacterium Shewanella oneidensis.</title>
        <authorList>
            <person name="Heidelberg J.F."/>
            <person name="Paulsen I.T."/>
            <person name="Nelson K.E."/>
            <person name="Gaidos E.J."/>
            <person name="Nelson W.C."/>
            <person name="Read T.D."/>
            <person name="Eisen J.A."/>
            <person name="Seshadri R."/>
            <person name="Ward N.L."/>
            <person name="Methe B.A."/>
            <person name="Clayton R.A."/>
            <person name="Meyer T."/>
            <person name="Tsapin A."/>
            <person name="Scott J."/>
            <person name="Beanan M.J."/>
            <person name="Brinkac L.M."/>
            <person name="Daugherty S.C."/>
            <person name="DeBoy R.T."/>
            <person name="Dodson R.J."/>
            <person name="Durkin A.S."/>
            <person name="Haft D.H."/>
            <person name="Kolonay J.F."/>
            <person name="Madupu R."/>
            <person name="Peterson J.D."/>
            <person name="Umayam L.A."/>
            <person name="White O."/>
            <person name="Wolf A.M."/>
            <person name="Vamathevan J.J."/>
            <person name="Weidman J.F."/>
            <person name="Impraim M."/>
            <person name="Lee K."/>
            <person name="Berry K.J."/>
            <person name="Lee C."/>
            <person name="Mueller J."/>
            <person name="Khouri H.M."/>
            <person name="Gill J."/>
            <person name="Utterback T.R."/>
            <person name="McDonald L.A."/>
            <person name="Feldblyum T.V."/>
            <person name="Smith H.O."/>
            <person name="Venter J.C."/>
            <person name="Nealson K.H."/>
            <person name="Fraser C.M."/>
        </authorList>
    </citation>
    <scope>NUCLEOTIDE SEQUENCE [LARGE SCALE GENOMIC DNA]</scope>
    <source>
        <strain>ATCC 700550 / JCM 31522 / CIP 106686 / LMG 19005 / NCIMB 14063 / MR-1</strain>
    </source>
</reference>
<comment type="function">
    <text evidence="2">NAD-dependent lysine deacetylase and desuccinylase that specifically removes acetyl and succinyl groups on target proteins. Modulates the activities of several proteins which are inactive in their acylated form.</text>
</comment>
<comment type="catalytic activity">
    <reaction evidence="2">
        <text>N(6)-acetyl-L-lysyl-[protein] + NAD(+) + H2O = 2''-O-acetyl-ADP-D-ribose + nicotinamide + L-lysyl-[protein]</text>
        <dbReference type="Rhea" id="RHEA:43636"/>
        <dbReference type="Rhea" id="RHEA-COMP:9752"/>
        <dbReference type="Rhea" id="RHEA-COMP:10731"/>
        <dbReference type="ChEBI" id="CHEBI:15377"/>
        <dbReference type="ChEBI" id="CHEBI:17154"/>
        <dbReference type="ChEBI" id="CHEBI:29969"/>
        <dbReference type="ChEBI" id="CHEBI:57540"/>
        <dbReference type="ChEBI" id="CHEBI:61930"/>
        <dbReference type="ChEBI" id="CHEBI:83767"/>
        <dbReference type="EC" id="2.3.1.286"/>
    </reaction>
</comment>
<comment type="catalytic activity">
    <reaction evidence="2">
        <text>N(6)-succinyl-L-lysyl-[protein] + NAD(+) + H2O = 2''-O-succinyl-ADP-D-ribose + nicotinamide + L-lysyl-[protein]</text>
        <dbReference type="Rhea" id="RHEA:47668"/>
        <dbReference type="Rhea" id="RHEA-COMP:9752"/>
        <dbReference type="Rhea" id="RHEA-COMP:11877"/>
        <dbReference type="ChEBI" id="CHEBI:15377"/>
        <dbReference type="ChEBI" id="CHEBI:17154"/>
        <dbReference type="ChEBI" id="CHEBI:29969"/>
        <dbReference type="ChEBI" id="CHEBI:57540"/>
        <dbReference type="ChEBI" id="CHEBI:87830"/>
        <dbReference type="ChEBI" id="CHEBI:87832"/>
    </reaction>
</comment>
<comment type="cofactor">
    <cofactor evidence="2">
        <name>Zn(2+)</name>
        <dbReference type="ChEBI" id="CHEBI:29105"/>
    </cofactor>
    <text evidence="2">Binds 1 zinc ion per subunit.</text>
</comment>
<comment type="subcellular location">
    <subcellularLocation>
        <location evidence="2">Cytoplasm</location>
    </subcellularLocation>
</comment>
<comment type="domain">
    <text evidence="2">2 residues (Tyr-54 and Arg-57) present in a large hydrophobic pocket are probably involved in substrate specificity. They are important for desuccinylation activity, but dispensable for deacetylation activity.</text>
</comment>
<comment type="miscellaneous">
    <text evidence="1 4">This protein might be subject to alternative promoter usage and might also encode a protein with a 7 or 13 residue-longer N-terminus.</text>
</comment>
<comment type="similarity">
    <text evidence="2">Belongs to the sirtuin family. Class III subfamily.</text>
</comment>
<evidence type="ECO:0000250" key="1">
    <source>
        <dbReference type="UniProtKB" id="P0A2F2"/>
    </source>
</evidence>
<evidence type="ECO:0000255" key="2">
    <source>
        <dbReference type="HAMAP-Rule" id="MF_01121"/>
    </source>
</evidence>
<evidence type="ECO:0000255" key="3">
    <source>
        <dbReference type="PROSITE-ProRule" id="PRU00236"/>
    </source>
</evidence>
<evidence type="ECO:0000305" key="4"/>
<proteinExistence type="inferred from homology"/>
<name>NPD_SHEON</name>
<organism>
    <name type="scientific">Shewanella oneidensis (strain ATCC 700550 / JCM 31522 / CIP 106686 / LMG 19005 / NCIMB 14063 / MR-1)</name>
    <dbReference type="NCBI Taxonomy" id="211586"/>
    <lineage>
        <taxon>Bacteria</taxon>
        <taxon>Pseudomonadati</taxon>
        <taxon>Pseudomonadota</taxon>
        <taxon>Gammaproteobacteria</taxon>
        <taxon>Alteromonadales</taxon>
        <taxon>Shewanellaceae</taxon>
        <taxon>Shewanella</taxon>
    </lineage>
</organism>